<comment type="function">
    <text evidence="3">Small multifunctional phosphoprotein involved in virion morphogenesis, egress and counteracting host innate immunity. Plays critical roles in the final steps of viral release by interacting with host TSG101, a member of the vacuolar protein-sorting pathway and using other cellular host proteins involved in vesicle formation pathway. Also acts as a viroporin and forms ion conductive pores allowing viral particle release. Impairs the generation of type I interferon by down-regulating host TLR3 and TLR7 as well as their downstream signaling pathways. Down-regulates the phosphorylation of host IRF3 via the interaction with host SIRP-alpha, thereby inhibiting IFN-I expression. Interacts with host microtubules.</text>
</comment>
<comment type="subunit">
    <text evidence="3">Forms homooligomers (By similarity). Interacts with host SRC, HCK, FYN, PIK3R3 and GRB2 (via SH3 domain); binding does not activate the kinases (By similarity). Interacts with host AMBP/bikunin and AMBP/alpha-1-microglobulin peptides (By similarity). Interacts with host HPX/hemopexin. Interacts (when phosphorylated) with capsid protein ORF2 (By similarity). Interacts with host TSG101; this interaction plays a role in viral release from the host cell (By similarity). Interacts with host SIRPA; this interaction down-regulates the phosphorylation of host IRF3 (By similarity).</text>
</comment>
<comment type="subcellular location">
    <subcellularLocation>
        <location evidence="3">Host endoplasmic reticulum membrane</location>
        <topology evidence="3">Lipid-anchor</topology>
    </subcellularLocation>
    <subcellularLocation>
        <location evidence="3">Host cytoplasm</location>
        <location evidence="3">Host cytoskeleton</location>
    </subcellularLocation>
    <subcellularLocation>
        <location evidence="3">Virion</location>
    </subcellularLocation>
    <subcellularLocation>
        <location evidence="3">Host cell membrane</location>
        <topology evidence="3">Lipid-anchor</topology>
    </subcellularLocation>
    <text evidence="3">The N-terminal region seems to associate with the cytoskeleton probably via one of its hydrophobic regions. Present on the surface of the membrane-wrapped virions.</text>
</comment>
<comment type="domain">
    <text evidence="3">The PSAP motif is necessary for the release of membrane-wrapped virions from infected cells.</text>
</comment>
<comment type="PTM">
    <text evidence="3">Palmitoylated in the N-terminus.</text>
</comment>
<comment type="miscellaneous">
    <text evidence="3">The viral particles present in feces and bile are non-enveloped, while those in circulating blood and culture supernatants are covered with a cellular membrane (quasi-enveloped).</text>
</comment>
<comment type="similarity">
    <text evidence="5">Belongs to the hepevirus ORF3 protein family.</text>
</comment>
<comment type="sequence caution" evidence="5">
    <conflict type="erroneous initiation">
        <sequence resource="EMBL-CDS" id="AAA45726"/>
    </conflict>
</comment>
<comment type="sequence caution" evidence="5">
    <conflict type="erroneous initiation">
        <sequence resource="EMBL-CDS" id="AAL50057"/>
    </conflict>
</comment>
<comment type="sequence caution" evidence="5">
    <conflict type="erroneous initiation">
        <sequence resource="EMBL-CDS" id="AAL50060"/>
    </conflict>
</comment>
<sequence>MGSRPCALGLFCCCSSCFCLCCPRHRPVSRLAAVVGGAAAVPAVVSGVTGLILSPSQSPIFIQPTPSPPMSPLRPGLDLVFANPPDHSAPLGVTRPSAPPLPHVVDLPQLGPRR</sequence>
<organismHost>
    <name type="scientific">Homo sapiens</name>
    <name type="common">Human</name>
    <dbReference type="NCBI Taxonomy" id="9606"/>
</organismHost>
<evidence type="ECO:0000250" key="1"/>
<evidence type="ECO:0000250" key="2">
    <source>
        <dbReference type="UniProtKB" id="Q68984"/>
    </source>
</evidence>
<evidence type="ECO:0000250" key="3">
    <source>
        <dbReference type="UniProtKB" id="Q81870"/>
    </source>
</evidence>
<evidence type="ECO:0000256" key="4">
    <source>
        <dbReference type="SAM" id="MobiDB-lite"/>
    </source>
</evidence>
<evidence type="ECO:0000305" key="5"/>
<organism>
    <name type="scientific">Hepatitis E virus genotype 1 (isolate Human/Pakistan/Sar-55)</name>
    <name type="common">HEV-1</name>
    <dbReference type="NCBI Taxonomy" id="33774"/>
    <lineage>
        <taxon>Viruses</taxon>
        <taxon>Riboviria</taxon>
        <taxon>Orthornavirae</taxon>
        <taxon>Kitrinoviricota</taxon>
        <taxon>Alsuviricetes</taxon>
        <taxon>Hepelivirales</taxon>
        <taxon>Hepeviridae</taxon>
        <taxon>Orthohepevirinae</taxon>
        <taxon>Paslahepevirus</taxon>
        <taxon>Hepatitis E virus</taxon>
    </lineage>
</organism>
<dbReference type="EMBL" id="M80581">
    <property type="protein sequence ID" value="AAA45726.1"/>
    <property type="status" value="ALT_INIT"/>
    <property type="molecule type" value="Genomic_RNA"/>
</dbReference>
<dbReference type="EMBL" id="AF444002">
    <property type="protein sequence ID" value="AAL50057.1"/>
    <property type="status" value="ALT_INIT"/>
    <property type="molecule type" value="Genomic_RNA"/>
</dbReference>
<dbReference type="EMBL" id="AF444003">
    <property type="protein sequence ID" value="AAL50060.1"/>
    <property type="status" value="ALT_INIT"/>
    <property type="molecule type" value="Genomic_RNA"/>
</dbReference>
<dbReference type="IntAct" id="P69617">
    <property type="interactions" value="1"/>
</dbReference>
<dbReference type="Proteomes" id="UP000001322">
    <property type="component" value="Genome"/>
</dbReference>
<dbReference type="Proteomes" id="UP000008498">
    <property type="component" value="Genome"/>
</dbReference>
<dbReference type="Proteomes" id="UP000180763">
    <property type="component" value="Genome"/>
</dbReference>
<dbReference type="GO" id="GO:0044167">
    <property type="term" value="C:host cell endoplasmic reticulum membrane"/>
    <property type="evidence" value="ECO:0007669"/>
    <property type="project" value="UniProtKB-SubCell"/>
</dbReference>
<dbReference type="GO" id="GO:0020002">
    <property type="term" value="C:host cell plasma membrane"/>
    <property type="evidence" value="ECO:0007669"/>
    <property type="project" value="UniProtKB-SubCell"/>
</dbReference>
<dbReference type="GO" id="GO:0044163">
    <property type="term" value="C:host cytoskeleton"/>
    <property type="evidence" value="ECO:0007669"/>
    <property type="project" value="UniProtKB-SubCell"/>
</dbReference>
<dbReference type="GO" id="GO:0016020">
    <property type="term" value="C:membrane"/>
    <property type="evidence" value="ECO:0007669"/>
    <property type="project" value="UniProtKB-KW"/>
</dbReference>
<dbReference type="GO" id="GO:0044423">
    <property type="term" value="C:virion component"/>
    <property type="evidence" value="ECO:0007669"/>
    <property type="project" value="UniProtKB-KW"/>
</dbReference>
<dbReference type="GO" id="GO:0052170">
    <property type="term" value="P:symbiont-mediated suppression of host innate immune response"/>
    <property type="evidence" value="ECO:0007669"/>
    <property type="project" value="UniProtKB-KW"/>
</dbReference>
<dbReference type="InterPro" id="IPR003384">
    <property type="entry name" value="HEV_Orf2"/>
</dbReference>
<dbReference type="Pfam" id="PF02444">
    <property type="entry name" value="HEV_ORF1"/>
    <property type="match status" value="1"/>
</dbReference>
<feature type="chain" id="PRO_0000100137" description="Protein ORF3">
    <location>
        <begin position="1"/>
        <end position="114"/>
    </location>
</feature>
<feature type="region of interest" description="Hydrophobic">
    <location>
        <begin position="6"/>
        <end position="22"/>
    </location>
</feature>
<feature type="region of interest" description="Interaction with host HPX" evidence="1">
    <location>
        <begin position="28"/>
        <end position="68"/>
    </location>
</feature>
<feature type="region of interest" description="Hydrophobic">
    <location>
        <begin position="33"/>
        <end position="53"/>
    </location>
</feature>
<feature type="region of interest" description="Interaction with the capsid protein" evidence="1">
    <location>
        <begin position="48"/>
        <end position="72"/>
    </location>
</feature>
<feature type="region of interest" description="Homodimerization, and interaction with host AMBP/bikunin" evidence="1">
    <location>
        <begin position="72"/>
        <end position="114"/>
    </location>
</feature>
<feature type="region of interest" description="Disordered" evidence="4">
    <location>
        <begin position="91"/>
        <end position="114"/>
    </location>
</feature>
<feature type="region of interest" description="Interaction with host SRC, HCK, FYN, PIK3R3 and GRB2" evidence="1">
    <location>
        <begin position="95"/>
        <end position="104"/>
    </location>
</feature>
<feature type="short sequence motif" description="PTAP/PSAP motif" evidence="3">
    <location>
        <begin position="96"/>
        <end position="99"/>
    </location>
</feature>
<feature type="modified residue" description="Phosphoserine; by host" evidence="2">
    <location>
        <position position="71"/>
    </location>
</feature>
<accession>P69617</accession>
<accession>P29325</accession>
<accession>Q77EC9</accession>
<name>ORF3_HEVPA</name>
<reference key="1">
    <citation type="journal article" date="1992" name="Proc. Natl. Acad. Sci. U.S.A.">
        <title>Characterization of a prototype strain of hepatitis E virus.</title>
        <authorList>
            <person name="Tsarev S.A."/>
            <person name="Emerson S.U."/>
            <person name="Reyes G.R."/>
            <person name="Tsareva T.S."/>
            <person name="Legters L.J."/>
            <person name="Malik I.A."/>
            <person name="Iqbal M."/>
            <person name="Purcell R.H."/>
        </authorList>
    </citation>
    <scope>NUCLEOTIDE SEQUENCE [GENOMIC RNA]</scope>
</reference>
<reference key="2">
    <citation type="journal article" date="2001" name="Proc. Natl. Acad. Sci. U.S.A.">
        <title>Recombinant hepatitis E virus genomes infectious for primates: importance of capping and discovery of a cis-reactive element.</title>
        <authorList>
            <person name="Emerson S.U."/>
            <person name="Zhang M."/>
            <person name="Meng X.J."/>
            <person name="Nguyen H."/>
            <person name="St Claire M."/>
            <person name="Govindarajan S."/>
            <person name="Huang Y.K."/>
            <person name="Purcell R.H."/>
        </authorList>
    </citation>
    <scope>NUCLEOTIDE SEQUENCE [GENOMIC RNA]</scope>
    <source>
        <strain>Isolate pSK-HEV-2</strain>
        <strain>Isolate pSK-HEV-3</strain>
    </source>
</reference>
<proteinExistence type="inferred from homology"/>
<gene>
    <name type="ORF">ORF3</name>
</gene>
<keyword id="KW-1032">Host cell membrane</keyword>
<keyword id="KW-1035">Host cytoplasm</keyword>
<keyword id="KW-1037">Host cytoskeleton</keyword>
<keyword id="KW-1038">Host endoplasmic reticulum</keyword>
<keyword id="KW-1043">Host membrane</keyword>
<keyword id="KW-0945">Host-virus interaction</keyword>
<keyword id="KW-1090">Inhibition of host innate immune response by virus</keyword>
<keyword id="KW-0449">Lipoprotein</keyword>
<keyword id="KW-0472">Membrane</keyword>
<keyword id="KW-0597">Phosphoprotein</keyword>
<keyword id="KW-0899">Viral immunoevasion</keyword>
<keyword id="KW-0946">Virion</keyword>
<protein>
    <recommendedName>
        <fullName>Protein ORF3</fullName>
        <shortName>pORF3</shortName>
    </recommendedName>
</protein>